<sequence>MLALRVLLKGKILIGGRVREREVLAEDGWIVKIGKRLNEEADLTLELGKRELAVPAPIDLHVHCRDPHPDYPFGFKTETRRFLLGGVATVVDMPNTRPAPTTPETYYEKEELARENAEIEVIVAGGVRDSQCTKELVEAGAYVLGEVFLATSTDAPAVPWSTLPEIFRELSPDGPLTIFHPELDELVAERPARNLYEHLKNRPPEAETTAVGLLAGLKVRYPSRIHLSHVTLPESVKIAKGADITVDVTPHHLFFDVLRVDPEDPVFKVNPPLRGRHHRLGLLRAVRRGDVDVLASDHAPHILEDEFEDVPSGVTGGEIILPAALTLHRRFGLSLRDAVAMITCRPAKLLGRDDLGEVAVGKRARITVVRMREFVVRAEEFGEEDRKFPYDGMRMFGEPVKLIDGTKVYDLKESRREGKPVILEGE</sequence>
<name>PYRC_METKA</name>
<comment type="function">
    <text evidence="1">Catalyzes the reversible cyclization of carbamoyl aspartate to dihydroorotate.</text>
</comment>
<comment type="catalytic activity">
    <reaction evidence="1">
        <text>(S)-dihydroorotate + H2O = N-carbamoyl-L-aspartate + H(+)</text>
        <dbReference type="Rhea" id="RHEA:24296"/>
        <dbReference type="ChEBI" id="CHEBI:15377"/>
        <dbReference type="ChEBI" id="CHEBI:15378"/>
        <dbReference type="ChEBI" id="CHEBI:30864"/>
        <dbReference type="ChEBI" id="CHEBI:32814"/>
        <dbReference type="EC" id="3.5.2.3"/>
    </reaction>
</comment>
<comment type="cofactor">
    <cofactor evidence="1">
        <name>Zn(2+)</name>
        <dbReference type="ChEBI" id="CHEBI:29105"/>
    </cofactor>
    <text evidence="1">Binds 2 Zn(2+) ions per subunit.</text>
</comment>
<comment type="pathway">
    <text evidence="1">Pyrimidine metabolism; UMP biosynthesis via de novo pathway; (S)-dihydroorotate from bicarbonate: step 3/3.</text>
</comment>
<comment type="similarity">
    <text evidence="1">Belongs to the metallo-dependent hydrolases superfamily. DHOase family. Class I DHOase subfamily.</text>
</comment>
<reference key="1">
    <citation type="journal article" date="2002" name="Proc. Natl. Acad. Sci. U.S.A.">
        <title>The complete genome of hyperthermophile Methanopyrus kandleri AV19 and monophyly of archaeal methanogens.</title>
        <authorList>
            <person name="Slesarev A.I."/>
            <person name="Mezhevaya K.V."/>
            <person name="Makarova K.S."/>
            <person name="Polushin N.N."/>
            <person name="Shcherbinina O.V."/>
            <person name="Shakhova V.V."/>
            <person name="Belova G.I."/>
            <person name="Aravind L."/>
            <person name="Natale D.A."/>
            <person name="Rogozin I.B."/>
            <person name="Tatusov R.L."/>
            <person name="Wolf Y.I."/>
            <person name="Stetter K.O."/>
            <person name="Malykh A.G."/>
            <person name="Koonin E.V."/>
            <person name="Kozyavkin S.A."/>
        </authorList>
    </citation>
    <scope>NUCLEOTIDE SEQUENCE [LARGE SCALE GENOMIC DNA]</scope>
    <source>
        <strain>AV19 / DSM 6324 / JCM 9639 / NBRC 100938</strain>
    </source>
</reference>
<accession>Q8TXX9</accession>
<gene>
    <name evidence="1" type="primary">pyrC</name>
    <name type="ordered locus">MK0530</name>
</gene>
<protein>
    <recommendedName>
        <fullName evidence="1">Dihydroorotase</fullName>
        <shortName evidence="1">DHOase</shortName>
        <ecNumber evidence="1">3.5.2.3</ecNumber>
    </recommendedName>
</protein>
<evidence type="ECO:0000255" key="1">
    <source>
        <dbReference type="HAMAP-Rule" id="MF_00220"/>
    </source>
</evidence>
<organism>
    <name type="scientific">Methanopyrus kandleri (strain AV19 / DSM 6324 / JCM 9639 / NBRC 100938)</name>
    <dbReference type="NCBI Taxonomy" id="190192"/>
    <lineage>
        <taxon>Archaea</taxon>
        <taxon>Methanobacteriati</taxon>
        <taxon>Methanobacteriota</taxon>
        <taxon>Methanomada group</taxon>
        <taxon>Methanopyri</taxon>
        <taxon>Methanopyrales</taxon>
        <taxon>Methanopyraceae</taxon>
        <taxon>Methanopyrus</taxon>
    </lineage>
</organism>
<keyword id="KW-0378">Hydrolase</keyword>
<keyword id="KW-0479">Metal-binding</keyword>
<keyword id="KW-0665">Pyrimidine biosynthesis</keyword>
<keyword id="KW-1185">Reference proteome</keyword>
<keyword id="KW-0862">Zinc</keyword>
<proteinExistence type="inferred from homology"/>
<feature type="chain" id="PRO_0000147271" description="Dihydroorotase">
    <location>
        <begin position="1"/>
        <end position="426"/>
    </location>
</feature>
<feature type="active site" evidence="1">
    <location>
        <position position="297"/>
    </location>
</feature>
<feature type="binding site" evidence="1">
    <location>
        <position position="61"/>
    </location>
    <ligand>
        <name>Zn(2+)</name>
        <dbReference type="ChEBI" id="CHEBI:29105"/>
        <label>1</label>
    </ligand>
</feature>
<feature type="binding site" evidence="1">
    <location>
        <begin position="63"/>
        <end position="65"/>
    </location>
    <ligand>
        <name>substrate</name>
    </ligand>
</feature>
<feature type="binding site" evidence="1">
    <location>
        <position position="63"/>
    </location>
    <ligand>
        <name>Zn(2+)</name>
        <dbReference type="ChEBI" id="CHEBI:29105"/>
        <label>1</label>
    </ligand>
</feature>
<feature type="binding site" evidence="1">
    <location>
        <position position="95"/>
    </location>
    <ligand>
        <name>substrate</name>
    </ligand>
</feature>
<feature type="binding site" evidence="1">
    <location>
        <position position="146"/>
    </location>
    <ligand>
        <name>Zn(2+)</name>
        <dbReference type="ChEBI" id="CHEBI:29105"/>
        <label>1</label>
    </ligand>
</feature>
<feature type="binding site" evidence="1">
    <location>
        <position position="146"/>
    </location>
    <ligand>
        <name>Zn(2+)</name>
        <dbReference type="ChEBI" id="CHEBI:29105"/>
        <label>2</label>
    </ligand>
</feature>
<feature type="binding site" evidence="1">
    <location>
        <position position="180"/>
    </location>
    <ligand>
        <name>Zn(2+)</name>
        <dbReference type="ChEBI" id="CHEBI:29105"/>
        <label>2</label>
    </ligand>
</feature>
<feature type="binding site" evidence="1">
    <location>
        <position position="229"/>
    </location>
    <ligand>
        <name>Zn(2+)</name>
        <dbReference type="ChEBI" id="CHEBI:29105"/>
        <label>2</label>
    </ligand>
</feature>
<feature type="binding site" evidence="1">
    <location>
        <position position="297"/>
    </location>
    <ligand>
        <name>Zn(2+)</name>
        <dbReference type="ChEBI" id="CHEBI:29105"/>
        <label>1</label>
    </ligand>
</feature>
<feature type="binding site" evidence="1">
    <location>
        <position position="301"/>
    </location>
    <ligand>
        <name>substrate</name>
    </ligand>
</feature>
<dbReference type="EC" id="3.5.2.3" evidence="1"/>
<dbReference type="EMBL" id="AE009439">
    <property type="protein sequence ID" value="AAM01745.1"/>
    <property type="molecule type" value="Genomic_DNA"/>
</dbReference>
<dbReference type="SMR" id="Q8TXX9"/>
<dbReference type="FunCoup" id="Q8TXX9">
    <property type="interactions" value="93"/>
</dbReference>
<dbReference type="STRING" id="190192.MK0530"/>
<dbReference type="PaxDb" id="190192-MK0530"/>
<dbReference type="EnsemblBacteria" id="AAM01745">
    <property type="protein sequence ID" value="AAM01745"/>
    <property type="gene ID" value="MK0530"/>
</dbReference>
<dbReference type="KEGG" id="mka:MK0530"/>
<dbReference type="PATRIC" id="fig|190192.8.peg.564"/>
<dbReference type="HOGENOM" id="CLU_015572_1_2_2"/>
<dbReference type="InParanoid" id="Q8TXX9"/>
<dbReference type="UniPathway" id="UPA00070">
    <property type="reaction ID" value="UER00117"/>
</dbReference>
<dbReference type="Proteomes" id="UP000001826">
    <property type="component" value="Chromosome"/>
</dbReference>
<dbReference type="GO" id="GO:0005737">
    <property type="term" value="C:cytoplasm"/>
    <property type="evidence" value="ECO:0007669"/>
    <property type="project" value="TreeGrafter"/>
</dbReference>
<dbReference type="GO" id="GO:0004038">
    <property type="term" value="F:allantoinase activity"/>
    <property type="evidence" value="ECO:0007669"/>
    <property type="project" value="TreeGrafter"/>
</dbReference>
<dbReference type="GO" id="GO:0004151">
    <property type="term" value="F:dihydroorotase activity"/>
    <property type="evidence" value="ECO:0007669"/>
    <property type="project" value="UniProtKB-UniRule"/>
</dbReference>
<dbReference type="GO" id="GO:0008270">
    <property type="term" value="F:zinc ion binding"/>
    <property type="evidence" value="ECO:0007669"/>
    <property type="project" value="UniProtKB-UniRule"/>
</dbReference>
<dbReference type="GO" id="GO:0044205">
    <property type="term" value="P:'de novo' UMP biosynthetic process"/>
    <property type="evidence" value="ECO:0007669"/>
    <property type="project" value="UniProtKB-UniRule"/>
</dbReference>
<dbReference type="GO" id="GO:0006145">
    <property type="term" value="P:purine nucleobase catabolic process"/>
    <property type="evidence" value="ECO:0007669"/>
    <property type="project" value="TreeGrafter"/>
</dbReference>
<dbReference type="CDD" id="cd01318">
    <property type="entry name" value="DHOase_IIb"/>
    <property type="match status" value="1"/>
</dbReference>
<dbReference type="Gene3D" id="3.20.20.140">
    <property type="entry name" value="Metal-dependent hydrolases"/>
    <property type="match status" value="1"/>
</dbReference>
<dbReference type="Gene3D" id="2.30.40.10">
    <property type="entry name" value="Urease, subunit C, domain 1"/>
    <property type="match status" value="1"/>
</dbReference>
<dbReference type="HAMAP" id="MF_00220_A">
    <property type="entry name" value="PyrC_classI_A"/>
    <property type="match status" value="1"/>
</dbReference>
<dbReference type="InterPro" id="IPR006680">
    <property type="entry name" value="Amidohydro-rel"/>
</dbReference>
<dbReference type="InterPro" id="IPR004722">
    <property type="entry name" value="DHOase"/>
</dbReference>
<dbReference type="InterPro" id="IPR050138">
    <property type="entry name" value="DHOase/Allantoinase_Hydrolase"/>
</dbReference>
<dbReference type="InterPro" id="IPR011059">
    <property type="entry name" value="Metal-dep_hydrolase_composite"/>
</dbReference>
<dbReference type="InterPro" id="IPR032466">
    <property type="entry name" value="Metal_Hydrolase"/>
</dbReference>
<dbReference type="PANTHER" id="PTHR43668">
    <property type="entry name" value="ALLANTOINASE"/>
    <property type="match status" value="1"/>
</dbReference>
<dbReference type="PANTHER" id="PTHR43668:SF2">
    <property type="entry name" value="ALLANTOINASE"/>
    <property type="match status" value="1"/>
</dbReference>
<dbReference type="Pfam" id="PF01979">
    <property type="entry name" value="Amidohydro_1"/>
    <property type="match status" value="1"/>
</dbReference>
<dbReference type="SUPFAM" id="SSF51338">
    <property type="entry name" value="Composite domain of metallo-dependent hydrolases"/>
    <property type="match status" value="1"/>
</dbReference>
<dbReference type="SUPFAM" id="SSF51556">
    <property type="entry name" value="Metallo-dependent hydrolases"/>
    <property type="match status" value="1"/>
</dbReference>